<dbReference type="EMBL" id="CH672346">
    <property type="protein sequence ID" value="EEQ42221.1"/>
    <property type="molecule type" value="Genomic_DNA"/>
</dbReference>
<dbReference type="PaxDb" id="5476-C4YD35"/>
<dbReference type="VEuPathDB" id="FungiDB:CAWG_00423"/>
<dbReference type="HOGENOM" id="CLU_336152_0_0_1"/>
<dbReference type="OMA" id="FQQMFNQ"/>
<dbReference type="OrthoDB" id="27169at766764"/>
<dbReference type="Proteomes" id="UP000001429">
    <property type="component" value="Chromosome 1, Supercontig 1.1"/>
</dbReference>
<dbReference type="GO" id="GO:0030479">
    <property type="term" value="C:actin cortical patch"/>
    <property type="evidence" value="ECO:0007669"/>
    <property type="project" value="UniProtKB-SubCell"/>
</dbReference>
<dbReference type="InterPro" id="IPR021582">
    <property type="entry name" value="Aim21"/>
</dbReference>
<dbReference type="Pfam" id="PF11489">
    <property type="entry name" value="Aim21"/>
    <property type="match status" value="1"/>
</dbReference>
<gene>
    <name type="primary">AIM21</name>
    <name type="ORF">CAWG_00423</name>
</gene>
<accession>C4YD35</accession>
<evidence type="ECO:0000250" key="1"/>
<evidence type="ECO:0000256" key="2">
    <source>
        <dbReference type="SAM" id="MobiDB-lite"/>
    </source>
</evidence>
<evidence type="ECO:0000305" key="3"/>
<comment type="function">
    <text evidence="1">Involved in mitochondrial migration along actin filaments.</text>
</comment>
<comment type="subcellular location">
    <subcellularLocation>
        <location evidence="1">Cytoplasm</location>
        <location evidence="1">Cytoskeleton</location>
        <location evidence="1">Actin patch</location>
    </subcellularLocation>
    <text evidence="1">Cortical actin patches.</text>
</comment>
<comment type="similarity">
    <text evidence="3">Belongs to the AIM21 family.</text>
</comment>
<feature type="chain" id="PRO_0000399515" description="Altered inheritance of mitochondria protein 21">
    <location>
        <begin position="1"/>
        <end position="847"/>
    </location>
</feature>
<feature type="region of interest" description="Disordered" evidence="2">
    <location>
        <begin position="1"/>
        <end position="675"/>
    </location>
</feature>
<feature type="region of interest" description="Disordered" evidence="2">
    <location>
        <begin position="704"/>
        <end position="740"/>
    </location>
</feature>
<feature type="region of interest" description="Disordered" evidence="2">
    <location>
        <begin position="799"/>
        <end position="818"/>
    </location>
</feature>
<feature type="compositionally biased region" description="Polar residues" evidence="2">
    <location>
        <begin position="11"/>
        <end position="28"/>
    </location>
</feature>
<feature type="compositionally biased region" description="Low complexity" evidence="2">
    <location>
        <begin position="31"/>
        <end position="57"/>
    </location>
</feature>
<feature type="compositionally biased region" description="Basic and acidic residues" evidence="2">
    <location>
        <begin position="72"/>
        <end position="81"/>
    </location>
</feature>
<feature type="compositionally biased region" description="Basic and acidic residues" evidence="2">
    <location>
        <begin position="102"/>
        <end position="112"/>
    </location>
</feature>
<feature type="compositionally biased region" description="Basic and acidic residues" evidence="2">
    <location>
        <begin position="123"/>
        <end position="149"/>
    </location>
</feature>
<feature type="compositionally biased region" description="Polar residues" evidence="2">
    <location>
        <begin position="174"/>
        <end position="183"/>
    </location>
</feature>
<feature type="compositionally biased region" description="Polar residues" evidence="2">
    <location>
        <begin position="189"/>
        <end position="227"/>
    </location>
</feature>
<feature type="compositionally biased region" description="Basic and acidic residues" evidence="2">
    <location>
        <begin position="228"/>
        <end position="258"/>
    </location>
</feature>
<feature type="compositionally biased region" description="Basic and acidic residues" evidence="2">
    <location>
        <begin position="267"/>
        <end position="289"/>
    </location>
</feature>
<feature type="compositionally biased region" description="Low complexity" evidence="2">
    <location>
        <begin position="290"/>
        <end position="306"/>
    </location>
</feature>
<feature type="compositionally biased region" description="Polar residues" evidence="2">
    <location>
        <begin position="316"/>
        <end position="328"/>
    </location>
</feature>
<feature type="compositionally biased region" description="Basic and acidic residues" evidence="2">
    <location>
        <begin position="358"/>
        <end position="372"/>
    </location>
</feature>
<feature type="compositionally biased region" description="Acidic residues" evidence="2">
    <location>
        <begin position="376"/>
        <end position="392"/>
    </location>
</feature>
<feature type="compositionally biased region" description="Acidic residues" evidence="2">
    <location>
        <begin position="423"/>
        <end position="435"/>
    </location>
</feature>
<feature type="compositionally biased region" description="Low complexity" evidence="2">
    <location>
        <begin position="474"/>
        <end position="486"/>
    </location>
</feature>
<feature type="compositionally biased region" description="Basic and acidic residues" evidence="2">
    <location>
        <begin position="535"/>
        <end position="544"/>
    </location>
</feature>
<feature type="compositionally biased region" description="Polar residues" evidence="2">
    <location>
        <begin position="570"/>
        <end position="594"/>
    </location>
</feature>
<feature type="compositionally biased region" description="Basic and acidic residues" evidence="2">
    <location>
        <begin position="634"/>
        <end position="647"/>
    </location>
</feature>
<feature type="compositionally biased region" description="Basic residues" evidence="2">
    <location>
        <begin position="656"/>
        <end position="667"/>
    </location>
</feature>
<feature type="compositionally biased region" description="Acidic residues" evidence="2">
    <location>
        <begin position="809"/>
        <end position="818"/>
    </location>
</feature>
<keyword id="KW-0963">Cytoplasm</keyword>
<keyword id="KW-0206">Cytoskeleton</keyword>
<sequence>MPDSEPLEPLNQESSSNTEQLKLSTTPNIPARPQTRPQKQTTTTTTVPTDQDSTTETSLEKPLDNPQDELDELAHEIEKVLSDPVIPPRPEHGSSTKSSETQTEHKEQDFEPAHPAIPQRPTNKKETIQSEVSDHKNGLESKFDLKVNEETPADSVSTDKDKVHIKPSIPTIPSRPQSRNLDSSEVDNTKPSTTASIPARPQRQSTSTQDEYKPQASNTPDIPTRPQTKTEKSVSSEELDKPGDEPSSKDQDNERYTDDSNASKSILETEKAVAQEEKKAKKSDVDNKPSEPTTSTDSSTEPAAPARGFRLPLHMQQGSGPISTSTPVAGSEAELNSLNNSNTFGDGEVTPGNSDTKATFKNDEDVENENRTDSSSFDDDMETISQDNEDGEQDRRNRQETATEENAQESEAPQFETTIIESGETEERDGDDTDSGELYSEQQQNKEKEKIVPATSTPKIPQRPPKKSSLSRATTNDSLTSLDSTSKPPKPVIPKRPTTEESLSNIEPTIPSRPATKKITSVGESQHEPIVPNRPDNKDLESSQRDTQASVKSKPPPPKPKKLSSKIAAFQQQLFNPANASSKEDVSSTGSKQPESGIRKRSTENSVLSRFGGKAIPLPGMFNPNQMPKPSISHGEETSDDREEKQESATANAPVRRTRGPRGKKLPKAVADAEVKTESRFAIESGKLWSIEFKKKIVEEKEITSTSVEDLEKPKILSENDEAGDEGKETAVENEVIDNPEIPVKDELQHDVVDVVGHPEKDVVTGLDDDDEDVPPEVNERFIKDEEISNVGVERTIASETTTEKHSTDEEEVEEEAVVDSVDIPIRRVAVNIVDSTEVQKDVEDEP</sequence>
<organism>
    <name type="scientific">Candida albicans (strain WO-1)</name>
    <name type="common">Yeast</name>
    <dbReference type="NCBI Taxonomy" id="294748"/>
    <lineage>
        <taxon>Eukaryota</taxon>
        <taxon>Fungi</taxon>
        <taxon>Dikarya</taxon>
        <taxon>Ascomycota</taxon>
        <taxon>Saccharomycotina</taxon>
        <taxon>Pichiomycetes</taxon>
        <taxon>Debaryomycetaceae</taxon>
        <taxon>Candida/Lodderomyces clade</taxon>
        <taxon>Candida</taxon>
    </lineage>
</organism>
<name>AIM21_CANAW</name>
<reference key="1">
    <citation type="journal article" date="2009" name="Nature">
        <title>Evolution of pathogenicity and sexual reproduction in eight Candida genomes.</title>
        <authorList>
            <person name="Butler G."/>
            <person name="Rasmussen M.D."/>
            <person name="Lin M.F."/>
            <person name="Santos M.A.S."/>
            <person name="Sakthikumar S."/>
            <person name="Munro C.A."/>
            <person name="Rheinbay E."/>
            <person name="Grabherr M."/>
            <person name="Forche A."/>
            <person name="Reedy J.L."/>
            <person name="Agrafioti I."/>
            <person name="Arnaud M.B."/>
            <person name="Bates S."/>
            <person name="Brown A.J.P."/>
            <person name="Brunke S."/>
            <person name="Costanzo M.C."/>
            <person name="Fitzpatrick D.A."/>
            <person name="de Groot P.W.J."/>
            <person name="Harris D."/>
            <person name="Hoyer L.L."/>
            <person name="Hube B."/>
            <person name="Klis F.M."/>
            <person name="Kodira C."/>
            <person name="Lennard N."/>
            <person name="Logue M.E."/>
            <person name="Martin R."/>
            <person name="Neiman A.M."/>
            <person name="Nikolaou E."/>
            <person name="Quail M.A."/>
            <person name="Quinn J."/>
            <person name="Santos M.C."/>
            <person name="Schmitzberger F.F."/>
            <person name="Sherlock G."/>
            <person name="Shah P."/>
            <person name="Silverstein K.A.T."/>
            <person name="Skrzypek M.S."/>
            <person name="Soll D."/>
            <person name="Staggs R."/>
            <person name="Stansfield I."/>
            <person name="Stumpf M.P.H."/>
            <person name="Sudbery P.E."/>
            <person name="Srikantha T."/>
            <person name="Zeng Q."/>
            <person name="Berman J."/>
            <person name="Berriman M."/>
            <person name="Heitman J."/>
            <person name="Gow N.A.R."/>
            <person name="Lorenz M.C."/>
            <person name="Birren B.W."/>
            <person name="Kellis M."/>
            <person name="Cuomo C.A."/>
        </authorList>
    </citation>
    <scope>NUCLEOTIDE SEQUENCE [LARGE SCALE GENOMIC DNA]</scope>
    <source>
        <strain>WO-1</strain>
    </source>
</reference>
<proteinExistence type="inferred from homology"/>
<protein>
    <recommendedName>
        <fullName>Altered inheritance of mitochondria protein 21</fullName>
    </recommendedName>
</protein>